<protein>
    <recommendedName>
        <fullName>Uncharacterized protein YghW</fullName>
    </recommendedName>
</protein>
<sequence length="95" mass="10945">MNNHFGKGLMAGLKATHADSAVNVTKFCADYKRGFVLGYSHRMYEKTGDRQLSAWEAGILTRRYGLDKEMVMDFFRENNSCSTLRFFMAGYRLEN</sequence>
<feature type="chain" id="PRO_0000169396" description="Uncharacterized protein YghW">
    <location>
        <begin position="1"/>
        <end position="95"/>
    </location>
</feature>
<name>YGHW_ECOL6</name>
<proteinExistence type="predicted"/>
<organism>
    <name type="scientific">Escherichia coli O6:H1 (strain CFT073 / ATCC 700928 / UPEC)</name>
    <dbReference type="NCBI Taxonomy" id="199310"/>
    <lineage>
        <taxon>Bacteria</taxon>
        <taxon>Pseudomonadati</taxon>
        <taxon>Pseudomonadota</taxon>
        <taxon>Gammaproteobacteria</taxon>
        <taxon>Enterobacterales</taxon>
        <taxon>Enterobacteriaceae</taxon>
        <taxon>Escherichia</taxon>
    </lineage>
</organism>
<reference key="1">
    <citation type="journal article" date="2002" name="Proc. Natl. Acad. Sci. U.S.A.">
        <title>Extensive mosaic structure revealed by the complete genome sequence of uropathogenic Escherichia coli.</title>
        <authorList>
            <person name="Welch R.A."/>
            <person name="Burland V."/>
            <person name="Plunkett G. III"/>
            <person name="Redford P."/>
            <person name="Roesch P."/>
            <person name="Rasko D."/>
            <person name="Buckles E.L."/>
            <person name="Liou S.-R."/>
            <person name="Boutin A."/>
            <person name="Hackett J."/>
            <person name="Stroud D."/>
            <person name="Mayhew G.F."/>
            <person name="Rose D.J."/>
            <person name="Zhou S."/>
            <person name="Schwartz D.C."/>
            <person name="Perna N.T."/>
            <person name="Mobley H.L.T."/>
            <person name="Donnenberg M.S."/>
            <person name="Blattner F.R."/>
        </authorList>
    </citation>
    <scope>NUCLEOTIDE SEQUENCE [LARGE SCALE GENOMIC DNA]</scope>
    <source>
        <strain>CFT073 / ATCC 700928 / UPEC</strain>
    </source>
</reference>
<gene>
    <name type="primary">yghW</name>
    <name type="ordered locus">c3735</name>
</gene>
<dbReference type="EMBL" id="AE014075">
    <property type="protein sequence ID" value="AAN82179.1"/>
    <property type="molecule type" value="Genomic_DNA"/>
</dbReference>
<dbReference type="RefSeq" id="WP_001059136.1">
    <property type="nucleotide sequence ID" value="NZ_CP051263.1"/>
</dbReference>
<dbReference type="STRING" id="199310.c3735"/>
<dbReference type="GeneID" id="93778987"/>
<dbReference type="KEGG" id="ecc:c3735"/>
<dbReference type="eggNOG" id="ENOG5031RXH">
    <property type="taxonomic scope" value="Bacteria"/>
</dbReference>
<dbReference type="HOGENOM" id="CLU_156478_0_0_6"/>
<dbReference type="BioCyc" id="ECOL199310:C3735-MONOMER"/>
<dbReference type="Proteomes" id="UP000001410">
    <property type="component" value="Chromosome"/>
</dbReference>
<dbReference type="InterPro" id="IPR022574">
    <property type="entry name" value="DUF2623"/>
</dbReference>
<dbReference type="Pfam" id="PF11115">
    <property type="entry name" value="DUF2623"/>
    <property type="match status" value="1"/>
</dbReference>
<keyword id="KW-1185">Reference proteome</keyword>
<accession>P64575</accession>
<accession>Q46848</accession>